<proteinExistence type="inferred from homology"/>
<gene>
    <name type="ordered locus">PM0504</name>
</gene>
<evidence type="ECO:0000305" key="1"/>
<accession>Q9CNC8</accession>
<feature type="chain" id="PRO_0000220584" description="UPF0275 protein PM0504">
    <location>
        <begin position="1"/>
        <end position="147"/>
    </location>
</feature>
<sequence length="147" mass="17369">MRYKMKVRFKYYEFQGGIYQTCGVYESDNEENDGVITDYLSTIPGSYADNGFKVLAAVKDPTITRDWISSQAFDALIEHDQIKVGFYLLDDMEEEDIPDDVDERDTAPRFIPRKEFAYLLEKWLDFYHRPITDINYQEIIDTKEAYL</sequence>
<keyword id="KW-1185">Reference proteome</keyword>
<reference key="1">
    <citation type="journal article" date="2001" name="Proc. Natl. Acad. Sci. U.S.A.">
        <title>Complete genomic sequence of Pasteurella multocida Pm70.</title>
        <authorList>
            <person name="May B.J."/>
            <person name="Zhang Q."/>
            <person name="Li L.L."/>
            <person name="Paustian M.L."/>
            <person name="Whittam T.S."/>
            <person name="Kapur V."/>
        </authorList>
    </citation>
    <scope>NUCLEOTIDE SEQUENCE [LARGE SCALE GENOMIC DNA]</scope>
    <source>
        <strain>Pm70</strain>
    </source>
</reference>
<protein>
    <recommendedName>
        <fullName>UPF0275 protein PM0504</fullName>
    </recommendedName>
</protein>
<comment type="similarity">
    <text evidence="1">Belongs to the UPF0275 family.</text>
</comment>
<organism>
    <name type="scientific">Pasteurella multocida (strain Pm70)</name>
    <dbReference type="NCBI Taxonomy" id="272843"/>
    <lineage>
        <taxon>Bacteria</taxon>
        <taxon>Pseudomonadati</taxon>
        <taxon>Pseudomonadota</taxon>
        <taxon>Gammaproteobacteria</taxon>
        <taxon>Pasteurellales</taxon>
        <taxon>Pasteurellaceae</taxon>
        <taxon>Pasteurella</taxon>
    </lineage>
</organism>
<dbReference type="EMBL" id="AE004439">
    <property type="protein sequence ID" value="AAK02588.1"/>
    <property type="molecule type" value="Genomic_DNA"/>
</dbReference>
<dbReference type="STRING" id="272843.PM0504"/>
<dbReference type="EnsemblBacteria" id="AAK02588">
    <property type="protein sequence ID" value="AAK02588"/>
    <property type="gene ID" value="PM0504"/>
</dbReference>
<dbReference type="KEGG" id="pmu:PM0504"/>
<dbReference type="HOGENOM" id="CLU_147996_0_0_6"/>
<dbReference type="Proteomes" id="UP000000809">
    <property type="component" value="Chromosome"/>
</dbReference>
<dbReference type="InterPro" id="IPR035416">
    <property type="entry name" value="DUF5376"/>
</dbReference>
<dbReference type="Pfam" id="PF17346">
    <property type="entry name" value="DUF5376"/>
    <property type="match status" value="1"/>
</dbReference>
<name>Y504_PASMU</name>